<sequence length="210" mass="23722">MRPRLWLLLAAQLTVLHGNSVLQQTPAYIKVQTNKMVMLSCEAKISLSNMRIYWLRQRQAPSSDSHHEFLALWDSAKGTIHGEEVEQEKIAVFRDASRFILNLTSVKPEDSGIYFCMIVGSPELTFGKGTQLSVVDFLPTTAQPTKKSTLKKRVCRLPRPETQKGPLCSPITLGLLVAGVLVLLVSLGVAIHLCCRRRRARLRFMKQFYK</sequence>
<evidence type="ECO:0000250" key="1">
    <source>
        <dbReference type="UniProtKB" id="P10300"/>
    </source>
</evidence>
<evidence type="ECO:0000255" key="2"/>
<evidence type="ECO:0000255" key="3">
    <source>
        <dbReference type="PROSITE-ProRule" id="PRU00114"/>
    </source>
</evidence>
<evidence type="ECO:0000269" key="4">
    <source>
    </source>
</evidence>
<evidence type="ECO:0000269" key="5">
    <source>
    </source>
</evidence>
<evidence type="ECO:0000269" key="6">
    <source>
    </source>
</evidence>
<evidence type="ECO:0000269" key="7">
    <source>
    </source>
</evidence>
<evidence type="ECO:0000269" key="8">
    <source>
    </source>
</evidence>
<evidence type="ECO:0000303" key="9">
    <source>
    </source>
</evidence>
<evidence type="ECO:0000303" key="10">
    <source>
    </source>
</evidence>
<evidence type="ECO:0000303" key="11">
    <source>
    </source>
</evidence>
<evidence type="ECO:0000305" key="12"/>
<keyword id="KW-1064">Adaptive immunity</keyword>
<keyword id="KW-0025">Alternative splicing</keyword>
<keyword id="KW-1003">Cell membrane</keyword>
<keyword id="KW-1015">Disulfide bond</keyword>
<keyword id="KW-0325">Glycoprotein</keyword>
<keyword id="KW-0391">Immunity</keyword>
<keyword id="KW-0393">Immunoglobulin domain</keyword>
<keyword id="KW-0449">Lipoprotein</keyword>
<keyword id="KW-0472">Membrane</keyword>
<keyword id="KW-0564">Palmitate</keyword>
<keyword id="KW-0597">Phosphoprotein</keyword>
<keyword id="KW-1185">Reference proteome</keyword>
<keyword id="KW-0964">Secreted</keyword>
<keyword id="KW-0732">Signal</keyword>
<keyword id="KW-0812">Transmembrane</keyword>
<keyword id="KW-1133">Transmembrane helix</keyword>
<proteinExistence type="evidence at protein level"/>
<accession>P10966</accession>
<accession>P14860</accession>
<accession>P14861</accession>
<accession>Q15980</accession>
<accession>Q496E0</accession>
<accession>Q496E1</accession>
<accession>Q496E2</accession>
<accession>Q9UDB4</accession>
<accession>Q9UDB5</accession>
<accession>Q9UDB6</accession>
<accession>Q9UDB7</accession>
<accession>Q9UDB8</accession>
<accession>Q9UDB9</accession>
<accession>Q9UDC0</accession>
<accession>Q9UQ55</accession>
<reference key="1">
    <citation type="journal article" date="1988" name="EMBO J.">
        <title>A second subunit of CD8 is expressed in human T cells.</title>
        <authorList>
            <person name="Norment A.M."/>
            <person name="Littman D.R."/>
        </authorList>
    </citation>
    <scope>NUCLEOTIDE SEQUENCE [MRNA] (ISOFORMS 1; 2 AND 3)</scope>
    <source>
        <tissue>T-cell</tissue>
    </source>
</reference>
<reference key="2">
    <citation type="journal article" date="1988" name="EMBO J.">
        <title>The human Lyt-3 molecule requires CD8 for cell surface expression.</title>
        <authorList>
            <person name="Disanto J.P."/>
            <person name="Knowles R.W."/>
            <person name="Flomenberg N."/>
        </authorList>
    </citation>
    <scope>NUCLEOTIDE SEQUENCE [MRNA] (ISOFORM 1)</scope>
    <scope>INTERACTION WITH CD8A</scope>
    <scope>SUBCELLULAR LOCATION</scope>
</reference>
<reference key="3">
    <citation type="journal article" date="1988" name="J. Exp. Med.">
        <title>A second chain of human CD8 is expressed on peripheral blood lymphocytes.</title>
        <authorList>
            <person name="Shiue L."/>
            <person name="Gorman S.D."/>
            <person name="Parnes J.R."/>
        </authorList>
    </citation>
    <scope>NUCLEOTIDE SEQUENCE [MRNA] (ISOFORM 1)</scope>
</reference>
<reference key="4">
    <citation type="journal article" date="1992" name="J. Immunol.">
        <title>Recent duplication of the two human CD8 beta-chain genes.</title>
        <authorList>
            <person name="Nakayama K."/>
            <person name="Kawachi Y."/>
            <person name="Tokito S."/>
            <person name="Minami N."/>
            <person name="Yamamoto R."/>
            <person name="Imai T."/>
            <person name="Gachelin G."/>
            <person name="Nakauchi H."/>
        </authorList>
    </citation>
    <scope>NUCLEOTIDE SEQUENCE [GENOMIC DNA] (ISOFORMS 1; 2; 3 AND 4)</scope>
</reference>
<reference key="5">
    <citation type="journal article" date="2005" name="Nature">
        <title>Generation and annotation of the DNA sequences of human chromosomes 2 and 4.</title>
        <authorList>
            <person name="Hillier L.W."/>
            <person name="Graves T.A."/>
            <person name="Fulton R.S."/>
            <person name="Fulton L.A."/>
            <person name="Pepin K.H."/>
            <person name="Minx P."/>
            <person name="Wagner-McPherson C."/>
            <person name="Layman D."/>
            <person name="Wylie K."/>
            <person name="Sekhon M."/>
            <person name="Becker M.C."/>
            <person name="Fewell G.A."/>
            <person name="Delehaunty K.D."/>
            <person name="Miner T.L."/>
            <person name="Nash W.E."/>
            <person name="Kremitzki C."/>
            <person name="Oddy L."/>
            <person name="Du H."/>
            <person name="Sun H."/>
            <person name="Bradshaw-Cordum H."/>
            <person name="Ali J."/>
            <person name="Carter J."/>
            <person name="Cordes M."/>
            <person name="Harris A."/>
            <person name="Isak A."/>
            <person name="van Brunt A."/>
            <person name="Nguyen C."/>
            <person name="Du F."/>
            <person name="Courtney L."/>
            <person name="Kalicki J."/>
            <person name="Ozersky P."/>
            <person name="Abbott S."/>
            <person name="Armstrong J."/>
            <person name="Belter E.A."/>
            <person name="Caruso L."/>
            <person name="Cedroni M."/>
            <person name="Cotton M."/>
            <person name="Davidson T."/>
            <person name="Desai A."/>
            <person name="Elliott G."/>
            <person name="Erb T."/>
            <person name="Fronick C."/>
            <person name="Gaige T."/>
            <person name="Haakenson W."/>
            <person name="Haglund K."/>
            <person name="Holmes A."/>
            <person name="Harkins R."/>
            <person name="Kim K."/>
            <person name="Kruchowski S.S."/>
            <person name="Strong C.M."/>
            <person name="Grewal N."/>
            <person name="Goyea E."/>
            <person name="Hou S."/>
            <person name="Levy A."/>
            <person name="Martinka S."/>
            <person name="Mead K."/>
            <person name="McLellan M.D."/>
            <person name="Meyer R."/>
            <person name="Randall-Maher J."/>
            <person name="Tomlinson C."/>
            <person name="Dauphin-Kohlberg S."/>
            <person name="Kozlowicz-Reilly A."/>
            <person name="Shah N."/>
            <person name="Swearengen-Shahid S."/>
            <person name="Snider J."/>
            <person name="Strong J.T."/>
            <person name="Thompson J."/>
            <person name="Yoakum M."/>
            <person name="Leonard S."/>
            <person name="Pearman C."/>
            <person name="Trani L."/>
            <person name="Radionenko M."/>
            <person name="Waligorski J.E."/>
            <person name="Wang C."/>
            <person name="Rock S.M."/>
            <person name="Tin-Wollam A.-M."/>
            <person name="Maupin R."/>
            <person name="Latreille P."/>
            <person name="Wendl M.C."/>
            <person name="Yang S.-P."/>
            <person name="Pohl C."/>
            <person name="Wallis J.W."/>
            <person name="Spieth J."/>
            <person name="Bieri T.A."/>
            <person name="Berkowicz N."/>
            <person name="Nelson J.O."/>
            <person name="Osborne J."/>
            <person name="Ding L."/>
            <person name="Meyer R."/>
            <person name="Sabo A."/>
            <person name="Shotland Y."/>
            <person name="Sinha P."/>
            <person name="Wohldmann P.E."/>
            <person name="Cook L.L."/>
            <person name="Hickenbotham M.T."/>
            <person name="Eldred J."/>
            <person name="Williams D."/>
            <person name="Jones T.A."/>
            <person name="She X."/>
            <person name="Ciccarelli F.D."/>
            <person name="Izaurralde E."/>
            <person name="Taylor J."/>
            <person name="Schmutz J."/>
            <person name="Myers R.M."/>
            <person name="Cox D.R."/>
            <person name="Huang X."/>
            <person name="McPherson J.D."/>
            <person name="Mardis E.R."/>
            <person name="Clifton S.W."/>
            <person name="Warren W.C."/>
            <person name="Chinwalla A.T."/>
            <person name="Eddy S.R."/>
            <person name="Marra M.A."/>
            <person name="Ovcharenko I."/>
            <person name="Furey T.S."/>
            <person name="Miller W."/>
            <person name="Eichler E.E."/>
            <person name="Bork P."/>
            <person name="Suyama M."/>
            <person name="Torrents D."/>
            <person name="Waterston R.H."/>
            <person name="Wilson R.K."/>
        </authorList>
    </citation>
    <scope>NUCLEOTIDE SEQUENCE [LARGE SCALE GENOMIC DNA]</scope>
</reference>
<reference key="6">
    <citation type="journal article" date="2004" name="Genome Res.">
        <title>The status, quality, and expansion of the NIH full-length cDNA project: the Mammalian Gene Collection (MGC).</title>
        <authorList>
            <consortium name="The MGC Project Team"/>
        </authorList>
    </citation>
    <scope>NUCLEOTIDE SEQUENCE [LARGE SCALE MRNA] (ISOFORMS 5 AND 8)</scope>
</reference>
<reference key="7">
    <citation type="journal article" date="1993" name="Eur. J. Immunol.">
        <title>Transcriptional diversity at the duplicated human CD8 beta loci.</title>
        <authorList>
            <person name="DiSanto J.P."/>
            <person name="Smith D."/>
            <person name="de Bruin D."/>
            <person name="Lacy E."/>
            <person name="Flomenberg N."/>
        </authorList>
    </citation>
    <scope>NUCLEOTIDE SEQUENCE [MRNA] OF 162-210 (ISOFORMS 1; 2; 3; 5; 6; 7 AND 8)</scope>
    <scope>ALTERNATIVE SPLICING</scope>
    <scope>TISSUE SPECIFICITY</scope>
    <source>
        <tissue>Peripheral blood</tissue>
    </source>
</reference>
<reference key="8">
    <citation type="journal article" date="2000" name="J. Immunol.">
        <title>Essential role of CD8 palmitoylation in CD8 coreceptor function.</title>
        <authorList>
            <person name="Arcaro A."/>
            <person name="Gregoire C."/>
            <person name="Boucheron N."/>
            <person name="Stotz S."/>
            <person name="Palmer E."/>
            <person name="Malissen B."/>
            <person name="Luescher I.F."/>
        </authorList>
    </citation>
    <scope>FUNCTION</scope>
    <scope>PALMITOYLATION</scope>
    <scope>SUBCELLULAR LOCATION</scope>
    <scope>INTERACTION WITH LCK</scope>
</reference>
<reference key="9">
    <citation type="journal article" date="2001" name="J. Exp. Med.">
        <title>CD8beta endows CD8 with efficient coreceptor function by coupling T cell receptor/CD3 to raft-associated CD8/p56(lck) complexes.</title>
        <authorList>
            <person name="Arcaro A."/>
            <person name="Gregoire C."/>
            <person name="Bakker T.R."/>
            <person name="Baldi L."/>
            <person name="Jordan M."/>
            <person name="Goffin L."/>
            <person name="Boucheron N."/>
            <person name="Wurm F."/>
            <person name="van der Merwe P.A."/>
            <person name="Malissen B."/>
            <person name="Luescher I.F."/>
        </authorList>
    </citation>
    <scope>FUNCTION</scope>
    <scope>SUBCELLULAR LOCATION</scope>
    <scope>INTERACTION WITH LCK</scope>
</reference>
<reference key="10">
    <citation type="journal article" date="2006" name="Cancer Res.">
        <title>Influence of human CD8 on antigen recognition by T-cell receptor-transduced cells.</title>
        <authorList>
            <person name="Lyons G.E."/>
            <person name="Moore T."/>
            <person name="Brasic N."/>
            <person name="Li M."/>
            <person name="Roszkowski J.J."/>
            <person name="Nishimura M.I."/>
        </authorList>
    </citation>
    <scope>FUNCTION</scope>
</reference>
<name>CD8B_HUMAN</name>
<dbReference type="EMBL" id="X13444">
    <property type="protein sequence ID" value="CAA31795.1"/>
    <property type="molecule type" value="mRNA"/>
</dbReference>
<dbReference type="EMBL" id="X13445">
    <property type="protein sequence ID" value="CAA31796.1"/>
    <property type="molecule type" value="mRNA"/>
</dbReference>
<dbReference type="EMBL" id="X13446">
    <property type="protein sequence ID" value="CAA31797.1"/>
    <property type="molecule type" value="mRNA"/>
</dbReference>
<dbReference type="EMBL" id="X13452">
    <property type="protein sequence ID" value="CAA31803.1"/>
    <property type="molecule type" value="mRNA"/>
</dbReference>
<dbReference type="EMBL" id="Y00805">
    <property type="protein sequence ID" value="CAA68750.1"/>
    <property type="molecule type" value="mRNA"/>
</dbReference>
<dbReference type="EMBL" id="M36712">
    <property type="protein sequence ID" value="AAA35664.1"/>
    <property type="molecule type" value="mRNA"/>
</dbReference>
<dbReference type="EMBL" id="S87090">
    <property type="protein sequence ID" value="AAB21669.2"/>
    <property type="molecule type" value="Genomic_DNA"/>
</dbReference>
<dbReference type="EMBL" id="S87068">
    <property type="protein sequence ID" value="AAB21669.2"/>
    <property type="status" value="JOINED"/>
    <property type="molecule type" value="Genomic_DNA"/>
</dbReference>
<dbReference type="EMBL" id="S87070">
    <property type="protein sequence ID" value="AAB21669.2"/>
    <property type="status" value="JOINED"/>
    <property type="molecule type" value="Genomic_DNA"/>
</dbReference>
<dbReference type="EMBL" id="S87073">
    <property type="protein sequence ID" value="AAB21669.2"/>
    <property type="status" value="JOINED"/>
    <property type="molecule type" value="Genomic_DNA"/>
</dbReference>
<dbReference type="EMBL" id="S87081">
    <property type="protein sequence ID" value="AAB21669.2"/>
    <property type="status" value="JOINED"/>
    <property type="molecule type" value="Genomic_DNA"/>
</dbReference>
<dbReference type="EMBL" id="S87087">
    <property type="protein sequence ID" value="AAB21670.2"/>
    <property type="molecule type" value="Genomic_DNA"/>
</dbReference>
<dbReference type="EMBL" id="S87068">
    <property type="protein sequence ID" value="AAB21670.2"/>
    <property type="status" value="JOINED"/>
    <property type="molecule type" value="Genomic_DNA"/>
</dbReference>
<dbReference type="EMBL" id="S87070">
    <property type="protein sequence ID" value="AAB21670.2"/>
    <property type="status" value="JOINED"/>
    <property type="molecule type" value="Genomic_DNA"/>
</dbReference>
<dbReference type="EMBL" id="S87073">
    <property type="protein sequence ID" value="AAB21670.2"/>
    <property type="status" value="JOINED"/>
    <property type="molecule type" value="Genomic_DNA"/>
</dbReference>
<dbReference type="EMBL" id="S87078">
    <property type="protein sequence ID" value="AAB21670.2"/>
    <property type="status" value="JOINED"/>
    <property type="molecule type" value="Genomic_DNA"/>
</dbReference>
<dbReference type="EMBL" id="S87081">
    <property type="protein sequence ID" value="AAB21670.2"/>
    <property type="status" value="JOINED"/>
    <property type="molecule type" value="Genomic_DNA"/>
</dbReference>
<dbReference type="EMBL" id="S87083">
    <property type="protein sequence ID" value="AAB21671.2"/>
    <property type="molecule type" value="Genomic_DNA"/>
</dbReference>
<dbReference type="EMBL" id="S87068">
    <property type="protein sequence ID" value="AAB21671.2"/>
    <property type="status" value="JOINED"/>
    <property type="molecule type" value="Genomic_DNA"/>
</dbReference>
<dbReference type="EMBL" id="S87070">
    <property type="protein sequence ID" value="AAB21671.2"/>
    <property type="status" value="JOINED"/>
    <property type="molecule type" value="Genomic_DNA"/>
</dbReference>
<dbReference type="EMBL" id="S87073">
    <property type="protein sequence ID" value="AAB21671.2"/>
    <property type="status" value="JOINED"/>
    <property type="molecule type" value="Genomic_DNA"/>
</dbReference>
<dbReference type="EMBL" id="S87078">
    <property type="protein sequence ID" value="AAB21671.2"/>
    <property type="status" value="JOINED"/>
    <property type="molecule type" value="Genomic_DNA"/>
</dbReference>
<dbReference type="EMBL" id="S87081">
    <property type="protein sequence ID" value="AAB21671.2"/>
    <property type="status" value="JOINED"/>
    <property type="molecule type" value="Genomic_DNA"/>
</dbReference>
<dbReference type="EMBL" id="S87083">
    <property type="protein sequence ID" value="AAB21672.2"/>
    <property type="molecule type" value="Genomic_DNA"/>
</dbReference>
<dbReference type="EMBL" id="S87068">
    <property type="protein sequence ID" value="AAB21672.2"/>
    <property type="status" value="JOINED"/>
    <property type="molecule type" value="Genomic_DNA"/>
</dbReference>
<dbReference type="EMBL" id="S87070">
    <property type="protein sequence ID" value="AAB21672.2"/>
    <property type="status" value="JOINED"/>
    <property type="molecule type" value="Genomic_DNA"/>
</dbReference>
<dbReference type="EMBL" id="S87073">
    <property type="protein sequence ID" value="AAB21672.2"/>
    <property type="status" value="JOINED"/>
    <property type="molecule type" value="Genomic_DNA"/>
</dbReference>
<dbReference type="EMBL" id="S87078">
    <property type="protein sequence ID" value="AAB21672.2"/>
    <property type="status" value="JOINED"/>
    <property type="molecule type" value="Genomic_DNA"/>
</dbReference>
<dbReference type="EMBL" id="S87081">
    <property type="protein sequence ID" value="AAB21672.2"/>
    <property type="status" value="JOINED"/>
    <property type="molecule type" value="Genomic_DNA"/>
</dbReference>
<dbReference type="EMBL" id="AC111200">
    <property type="status" value="NOT_ANNOTATED_CDS"/>
    <property type="molecule type" value="Genomic_DNA"/>
</dbReference>
<dbReference type="EMBL" id="BC100911">
    <property type="protein sequence ID" value="AAI00912.1"/>
    <property type="molecule type" value="mRNA"/>
</dbReference>
<dbReference type="EMBL" id="BC100912">
    <property type="protein sequence ID" value="AAI00913.1"/>
    <property type="molecule type" value="mRNA"/>
</dbReference>
<dbReference type="EMBL" id="BC100913">
    <property type="protein sequence ID" value="AAI00914.1"/>
    <property type="molecule type" value="mRNA"/>
</dbReference>
<dbReference type="EMBL" id="BC100914">
    <property type="protein sequence ID" value="AAI00915.1"/>
    <property type="molecule type" value="mRNA"/>
</dbReference>
<dbReference type="EMBL" id="S55731">
    <property type="protein sequence ID" value="AAD13877.1"/>
    <property type="status" value="ALT_SEQ"/>
    <property type="molecule type" value="Genomic_DNA"/>
</dbReference>
<dbReference type="EMBL" id="S55730">
    <property type="protein sequence ID" value="AAD13877.1"/>
    <property type="status" value="JOINED"/>
    <property type="molecule type" value="Genomic_DNA"/>
</dbReference>
<dbReference type="EMBL" id="S55733">
    <property type="protein sequence ID" value="AAD13877.1"/>
    <property type="status" value="JOINED"/>
    <property type="molecule type" value="Genomic_DNA"/>
</dbReference>
<dbReference type="CCDS" id="CCDS1994.1">
    <molecule id="P10966-3"/>
</dbReference>
<dbReference type="CCDS" id="CCDS1995.1">
    <molecule id="P10966-6"/>
</dbReference>
<dbReference type="CCDS" id="CCDS1997.1">
    <molecule id="P10966-1"/>
</dbReference>
<dbReference type="CCDS" id="CCDS42708.1">
    <molecule id="P10966-2"/>
</dbReference>
<dbReference type="CCDS" id="CCDS54376.1">
    <molecule id="P10966-9"/>
</dbReference>
<dbReference type="PIR" id="C49050">
    <property type="entry name" value="C49050"/>
</dbReference>
<dbReference type="PIR" id="D46482">
    <property type="entry name" value="D46482"/>
</dbReference>
<dbReference type="PIR" id="E49050">
    <property type="entry name" value="E49050"/>
</dbReference>
<dbReference type="PIR" id="G49050">
    <property type="entry name" value="G49050"/>
</dbReference>
<dbReference type="PIR" id="S01647">
    <property type="entry name" value="E46482"/>
</dbReference>
<dbReference type="PIR" id="S01873">
    <property type="entry name" value="C46482"/>
</dbReference>
<dbReference type="PIR" id="S01874">
    <property type="entry name" value="B46482"/>
</dbReference>
<dbReference type="PIR" id="T01073">
    <property type="entry name" value="T01073"/>
</dbReference>
<dbReference type="RefSeq" id="NP_001171571.1">
    <molecule id="P10966-9"/>
    <property type="nucleotide sequence ID" value="NM_001178100.2"/>
</dbReference>
<dbReference type="RefSeq" id="NP_004922.1">
    <molecule id="P10966-1"/>
    <property type="nucleotide sequence ID" value="NM_004931.5"/>
</dbReference>
<dbReference type="RefSeq" id="NP_742099.1">
    <molecule id="P10966-2"/>
    <property type="nucleotide sequence ID" value="NM_172101.5"/>
</dbReference>
<dbReference type="RefSeq" id="NP_742100.1">
    <molecule id="P10966-3"/>
    <property type="nucleotide sequence ID" value="NM_172102.5"/>
</dbReference>
<dbReference type="RefSeq" id="NP_757362.1">
    <molecule id="P10966-6"/>
    <property type="nucleotide sequence ID" value="NM_172213.5"/>
</dbReference>
<dbReference type="SMR" id="P10966"/>
<dbReference type="BioGRID" id="107364">
    <property type="interactions" value="19"/>
</dbReference>
<dbReference type="ComplexPortal" id="CPX-6741">
    <property type="entry name" value="CD8alpha-beta complex"/>
</dbReference>
<dbReference type="FunCoup" id="P10966">
    <property type="interactions" value="657"/>
</dbReference>
<dbReference type="IntAct" id="P10966">
    <property type="interactions" value="15"/>
</dbReference>
<dbReference type="GlyCosmos" id="P10966">
    <property type="glycosylation" value="1 site, No reported glycans"/>
</dbReference>
<dbReference type="GlyGen" id="P10966">
    <property type="glycosylation" value="1 site"/>
</dbReference>
<dbReference type="iPTMnet" id="P10966"/>
<dbReference type="PhosphoSitePlus" id="P10966"/>
<dbReference type="SwissPalm" id="P10966"/>
<dbReference type="BioMuta" id="CD8B"/>
<dbReference type="DMDM" id="116032"/>
<dbReference type="MassIVE" id="P10966"/>
<dbReference type="PaxDb" id="9606-ENSP00000331172"/>
<dbReference type="PeptideAtlas" id="P10966"/>
<dbReference type="ProteomicsDB" id="52679">
    <molecule id="P10966-1"/>
</dbReference>
<dbReference type="ProteomicsDB" id="52680">
    <molecule id="P10966-2"/>
</dbReference>
<dbReference type="ProteomicsDB" id="52681">
    <molecule id="P10966-3"/>
</dbReference>
<dbReference type="ProteomicsDB" id="52682">
    <molecule id="P10966-4"/>
</dbReference>
<dbReference type="ProteomicsDB" id="52683">
    <molecule id="P10966-6"/>
</dbReference>
<dbReference type="ProteomicsDB" id="52684">
    <molecule id="P10966-7"/>
</dbReference>
<dbReference type="ProteomicsDB" id="52685">
    <molecule id="P10966-8"/>
</dbReference>
<dbReference type="ProteomicsDB" id="52686">
    <molecule id="P10966-9"/>
</dbReference>
<dbReference type="ProteomicsDB" id="61988"/>
<dbReference type="ABCD" id="P10966">
    <property type="antibodies" value="97 sequenced antibodies"/>
</dbReference>
<dbReference type="Antibodypedia" id="3816">
    <property type="antibodies" value="1362 antibodies from 39 providers"/>
</dbReference>
<dbReference type="DNASU" id="926"/>
<dbReference type="Ensembl" id="ENST00000331469.6">
    <molecule id="P10966-6"/>
    <property type="protein sequence ID" value="ENSP00000331172.2"/>
    <property type="gene ID" value="ENSG00000172116.23"/>
</dbReference>
<dbReference type="Ensembl" id="ENST00000349455.7">
    <molecule id="P10966-3"/>
    <property type="protein sequence ID" value="ENSP00000340592.3"/>
    <property type="gene ID" value="ENSG00000172116.23"/>
</dbReference>
<dbReference type="Ensembl" id="ENST00000390655.12">
    <molecule id="P10966-1"/>
    <property type="protein sequence ID" value="ENSP00000375070.6"/>
    <property type="gene ID" value="ENSG00000172116.23"/>
</dbReference>
<dbReference type="Ensembl" id="ENST00000393759.6">
    <molecule id="P10966-2"/>
    <property type="protein sequence ID" value="ENSP00000377356.2"/>
    <property type="gene ID" value="ENSG00000172116.23"/>
</dbReference>
<dbReference type="Ensembl" id="ENST00000393761.6">
    <molecule id="P10966-9"/>
    <property type="protein sequence ID" value="ENSP00000377358.2"/>
    <property type="gene ID" value="ENSG00000172116.23"/>
</dbReference>
<dbReference type="GeneID" id="926"/>
<dbReference type="KEGG" id="hsa:926"/>
<dbReference type="MANE-Select" id="ENST00000390655.12">
    <property type="protein sequence ID" value="ENSP00000375070.6"/>
    <property type="RefSeq nucleotide sequence ID" value="NM_004931.5"/>
    <property type="RefSeq protein sequence ID" value="NP_004922.1"/>
</dbReference>
<dbReference type="UCSC" id="uc002srw.4">
    <molecule id="P10966-1"/>
    <property type="organism name" value="human"/>
</dbReference>
<dbReference type="AGR" id="HGNC:1707"/>
<dbReference type="CTD" id="926"/>
<dbReference type="DisGeNET" id="926"/>
<dbReference type="GeneCards" id="CD8B"/>
<dbReference type="HGNC" id="HGNC:1707">
    <property type="gene designation" value="CD8B"/>
</dbReference>
<dbReference type="HPA" id="ENSG00000172116">
    <property type="expression patterns" value="Tissue enriched (lymphoid)"/>
</dbReference>
<dbReference type="MIM" id="186730">
    <property type="type" value="gene"/>
</dbReference>
<dbReference type="neXtProt" id="NX_P10966"/>
<dbReference type="OpenTargets" id="ENSG00000172116"/>
<dbReference type="PharmGKB" id="PA26245"/>
<dbReference type="VEuPathDB" id="HostDB:ENSG00000172116"/>
<dbReference type="eggNOG" id="ENOG502SANQ">
    <property type="taxonomic scope" value="Eukaryota"/>
</dbReference>
<dbReference type="GeneTree" id="ENSGT00510000048998"/>
<dbReference type="HOGENOM" id="CLU_089344_0_0_1"/>
<dbReference type="InParanoid" id="P10966"/>
<dbReference type="OMA" id="RLWLRIH"/>
<dbReference type="OrthoDB" id="9394844at2759"/>
<dbReference type="PAN-GO" id="P10966">
    <property type="GO annotations" value="1 GO annotation based on evolutionary models"/>
</dbReference>
<dbReference type="PhylomeDB" id="P10966"/>
<dbReference type="TreeFam" id="TF338028"/>
<dbReference type="PathwayCommons" id="P10966"/>
<dbReference type="Reactome" id="R-HSA-182218">
    <property type="pathway name" value="Nef Mediated CD8 Down-regulation"/>
</dbReference>
<dbReference type="Reactome" id="R-HSA-198933">
    <property type="pathway name" value="Immunoregulatory interactions between a Lymphoid and a non-Lymphoid cell"/>
</dbReference>
<dbReference type="BioGRID-ORCS" id="926">
    <property type="hits" value="57 hits in 1103 CRISPR screens"/>
</dbReference>
<dbReference type="GenomeRNAi" id="926"/>
<dbReference type="Pharos" id="P10966">
    <property type="development level" value="Tbio"/>
</dbReference>
<dbReference type="PRO" id="PR:P10966"/>
<dbReference type="Proteomes" id="UP000005640">
    <property type="component" value="Chromosome 2"/>
</dbReference>
<dbReference type="RNAct" id="P10966">
    <property type="molecule type" value="protein"/>
</dbReference>
<dbReference type="Bgee" id="ENSG00000172116">
    <property type="expression patterns" value="Expressed in granulocyte and 99 other cell types or tissues"/>
</dbReference>
<dbReference type="ExpressionAtlas" id="P10966">
    <property type="expression patterns" value="baseline and differential"/>
</dbReference>
<dbReference type="GO" id="GO:0009986">
    <property type="term" value="C:cell surface"/>
    <property type="evidence" value="ECO:0000318"/>
    <property type="project" value="GO_Central"/>
</dbReference>
<dbReference type="GO" id="GO:0031901">
    <property type="term" value="C:early endosome membrane"/>
    <property type="evidence" value="ECO:0000304"/>
    <property type="project" value="Reactome"/>
</dbReference>
<dbReference type="GO" id="GO:0005576">
    <property type="term" value="C:extracellular region"/>
    <property type="evidence" value="ECO:0007669"/>
    <property type="project" value="UniProtKB-SubCell"/>
</dbReference>
<dbReference type="GO" id="GO:0005886">
    <property type="term" value="C:plasma membrane"/>
    <property type="evidence" value="ECO:0000314"/>
    <property type="project" value="HPA"/>
</dbReference>
<dbReference type="GO" id="GO:0043235">
    <property type="term" value="C:receptor complex"/>
    <property type="evidence" value="ECO:0000266"/>
    <property type="project" value="ComplexPortal"/>
</dbReference>
<dbReference type="GO" id="GO:0042101">
    <property type="term" value="C:T cell receptor complex"/>
    <property type="evidence" value="ECO:0000303"/>
    <property type="project" value="UniProtKB"/>
</dbReference>
<dbReference type="GO" id="GO:0015026">
    <property type="term" value="F:coreceptor activity"/>
    <property type="evidence" value="ECO:0000303"/>
    <property type="project" value="UniProtKB"/>
</dbReference>
<dbReference type="GO" id="GO:0042288">
    <property type="term" value="F:MHC class I protein binding"/>
    <property type="evidence" value="ECO:0000303"/>
    <property type="project" value="UniProtKB"/>
</dbReference>
<dbReference type="GO" id="GO:0002250">
    <property type="term" value="P:adaptive immune response"/>
    <property type="evidence" value="ECO:0000303"/>
    <property type="project" value="ComplexPortal"/>
</dbReference>
<dbReference type="GO" id="GO:0007169">
    <property type="term" value="P:cell surface receptor protein tyrosine kinase signaling pathway"/>
    <property type="evidence" value="ECO:0000303"/>
    <property type="project" value="UniProtKB"/>
</dbReference>
<dbReference type="GO" id="GO:0006955">
    <property type="term" value="P:immune response"/>
    <property type="evidence" value="ECO:0000303"/>
    <property type="project" value="UniProtKB"/>
</dbReference>
<dbReference type="GO" id="GO:0042110">
    <property type="term" value="P:T cell activation"/>
    <property type="evidence" value="ECO:0000314"/>
    <property type="project" value="ComplexPortal"/>
</dbReference>
<dbReference type="GO" id="GO:0050852">
    <property type="term" value="P:T cell receptor signaling pathway"/>
    <property type="evidence" value="ECO:0000314"/>
    <property type="project" value="ComplexPortal"/>
</dbReference>
<dbReference type="CDD" id="cd07700">
    <property type="entry name" value="IgV_CD8_beta"/>
    <property type="match status" value="1"/>
</dbReference>
<dbReference type="FunFam" id="2.60.40.10:FF:000645">
    <property type="entry name" value="T-cell surface glycoprotein CD8 beta chain"/>
    <property type="match status" value="1"/>
</dbReference>
<dbReference type="Gene3D" id="2.60.40.10">
    <property type="entry name" value="Immunoglobulins"/>
    <property type="match status" value="1"/>
</dbReference>
<dbReference type="InterPro" id="IPR042414">
    <property type="entry name" value="CD8B"/>
</dbReference>
<dbReference type="InterPro" id="IPR007110">
    <property type="entry name" value="Ig-like_dom"/>
</dbReference>
<dbReference type="InterPro" id="IPR036179">
    <property type="entry name" value="Ig-like_dom_sf"/>
</dbReference>
<dbReference type="InterPro" id="IPR013783">
    <property type="entry name" value="Ig-like_fold"/>
</dbReference>
<dbReference type="InterPro" id="IPR003599">
    <property type="entry name" value="Ig_sub"/>
</dbReference>
<dbReference type="InterPro" id="IPR013106">
    <property type="entry name" value="Ig_V-set"/>
</dbReference>
<dbReference type="PANTHER" id="PTHR11292">
    <property type="entry name" value="T-CELL SURFACE GLYCOPROTEIN CD8 BETA CHAIN"/>
    <property type="match status" value="1"/>
</dbReference>
<dbReference type="PANTHER" id="PTHR11292:SF7">
    <property type="entry name" value="T-CELL SURFACE GLYCOPROTEIN CD8 BETA CHAIN-RELATED"/>
    <property type="match status" value="1"/>
</dbReference>
<dbReference type="Pfam" id="PF07686">
    <property type="entry name" value="V-set"/>
    <property type="match status" value="1"/>
</dbReference>
<dbReference type="SMART" id="SM00409">
    <property type="entry name" value="IG"/>
    <property type="match status" value="1"/>
</dbReference>
<dbReference type="SMART" id="SM00406">
    <property type="entry name" value="IGv"/>
    <property type="match status" value="1"/>
</dbReference>
<dbReference type="SUPFAM" id="SSF48726">
    <property type="entry name" value="Immunoglobulin"/>
    <property type="match status" value="1"/>
</dbReference>
<dbReference type="PROSITE" id="PS50835">
    <property type="entry name" value="IG_LIKE"/>
    <property type="match status" value="1"/>
</dbReference>
<organism>
    <name type="scientific">Homo sapiens</name>
    <name type="common">Human</name>
    <dbReference type="NCBI Taxonomy" id="9606"/>
    <lineage>
        <taxon>Eukaryota</taxon>
        <taxon>Metazoa</taxon>
        <taxon>Chordata</taxon>
        <taxon>Craniata</taxon>
        <taxon>Vertebrata</taxon>
        <taxon>Euteleostomi</taxon>
        <taxon>Mammalia</taxon>
        <taxon>Eutheria</taxon>
        <taxon>Euarchontoglires</taxon>
        <taxon>Primates</taxon>
        <taxon>Haplorrhini</taxon>
        <taxon>Catarrhini</taxon>
        <taxon>Hominidae</taxon>
        <taxon>Homo</taxon>
    </lineage>
</organism>
<protein>
    <recommendedName>
        <fullName>T-cell surface glycoprotein CD8 beta chain</fullName>
    </recommendedName>
    <cdAntigenName>CD8b</cdAntigenName>
</protein>
<gene>
    <name type="primary">CD8B</name>
    <name type="synonym">CD8B1</name>
</gene>
<feature type="signal peptide">
    <location>
        <begin position="1"/>
        <end position="21"/>
    </location>
</feature>
<feature type="chain" id="PRO_0000014643" description="T-cell surface glycoprotein CD8 beta chain">
    <location>
        <begin position="22"/>
        <end position="210"/>
    </location>
</feature>
<feature type="topological domain" description="Extracellular" evidence="2">
    <location>
        <begin position="22"/>
        <end position="170"/>
    </location>
</feature>
<feature type="transmembrane region" description="Helical" evidence="2">
    <location>
        <begin position="171"/>
        <end position="191"/>
    </location>
</feature>
<feature type="topological domain" description="Cytoplasmic" evidence="2">
    <location>
        <begin position="192"/>
        <end position="210"/>
    </location>
</feature>
<feature type="domain" description="Ig-like V-type">
    <location>
        <begin position="22"/>
        <end position="132"/>
    </location>
</feature>
<feature type="modified residue" description="Phosphotyrosine" evidence="2">
    <location>
        <position position="209"/>
    </location>
</feature>
<feature type="glycosylation site" description="N-linked (GlcNAc...) asparagine" evidence="2">
    <location>
        <position position="102"/>
    </location>
</feature>
<feature type="disulfide bond" evidence="3">
    <location>
        <begin position="41"/>
        <end position="116"/>
    </location>
</feature>
<feature type="splice variant" id="VSP_039654" description="In isoform 7." evidence="11">
    <original>GPLCSPITLGLLVAGVLVLLVSLGVAIHLCCRRRRARLRFMKQFYK</original>
    <variation>DFTNKQRIGFWCPATKRHRSVMSTMWKNERRDTFNPGEFNGC</variation>
    <location>
        <begin position="165"/>
        <end position="210"/>
    </location>
</feature>
<feature type="splice variant" id="VSP_039655" description="In isoform 8." evidence="9 11">
    <original>PLCSPITLGLLVAGVLVLLVSLGVAIHLCCRRRRARLRFMKQFYK</original>
    <variation>LKGKVYQEPLSPNACMDTTAILQPHRSCLTHGS</variation>
    <location>
        <begin position="166"/>
        <end position="210"/>
    </location>
</feature>
<feature type="splice variant" id="VSP_002492" description="In isoform 3 and isoform 6." evidence="10 11">
    <location>
        <begin position="166"/>
        <end position="195"/>
    </location>
</feature>
<feature type="splice variant" id="VSP_002490" description="In isoform 2." evidence="10 11">
    <original>FYK</original>
    <variation>LRLHPLEKCSRMDY</variation>
    <location>
        <begin position="208"/>
        <end position="210"/>
    </location>
</feature>
<feature type="splice variant" id="VSP_002493" description="In isoform 3 and isoform 5." evidence="9 10 11">
    <original>FYK</original>
    <variation>PQGEGISGTFVPQCLHGYYSNTTTSQKLLNPWILKT</variation>
    <location>
        <begin position="208"/>
        <end position="210"/>
    </location>
</feature>
<feature type="splice variant" id="VSP_002491" description="In isoform 4." evidence="12">
    <original>FYK</original>
    <variation>KFNIVCLKISGFTTCCCFQILQISREYGFGVLLQKDIGQ</variation>
    <location>
        <begin position="208"/>
        <end position="210"/>
    </location>
</feature>
<feature type="sequence conflict" description="In Ref. 7; no nucleotide entry." evidence="12" ref="7">
    <location>
        <position position="173"/>
    </location>
</feature>
<feature type="sequence conflict" description="In Ref. 6; AAI00915." evidence="12" ref="6">
    <original>V</original>
    <variation>I</variation>
    <location>
        <position position="180"/>
    </location>
</feature>
<feature type="sequence conflict" description="In Ref. 6; AAI00915." evidence="12" ref="6">
    <original>I</original>
    <variation>V</variation>
    <location sequence="P10966-6">
        <position position="213"/>
    </location>
</feature>
<comment type="function">
    <text evidence="1 4 5 6">Integral membrane glycoprotein that plays an essential role in the immune response and serves multiple functions in responses against both external and internal offenses. In T-cells, functions primarily as a coreceptor for MHC class I molecule:peptide complex. The antigens presented by class I peptides are derived from cytosolic proteins while class II derived from extracellular proteins. Interacts simultaneously with the T-cell receptor (TCR) and the MHC class I proteins presented by antigen presenting cells (APCs). In turn, recruits the Src kinase LCK to the vicinity of the TCR-CD3 complex. A palmitoylation site in the cytoplasmic tail of CD8B chain contributes to partitioning of CD8 into the plasma membrane lipid rafts where signaling proteins are enriched. Once LCK recruited, it initiates different intracellular signaling pathways by phosphorylating various substrates ultimately leading to lymphokine production, motility, adhesion and activation of cytotoxic T-lymphocytes (CTLs). Additionally, plays a critical role in thymic selection of CD8+ T-cells.</text>
</comment>
<comment type="subunit">
    <text evidence="1 4 5">Forms disulfide-linked heterodimers with CD8A at the cell surface. Interacts with CD3D; this interaction couples TCR-CD3 with CD8. Interacts with LCK.</text>
</comment>
<comment type="subcellular location">
    <molecule>Isoform 1</molecule>
    <subcellularLocation>
        <location evidence="5 7">Cell membrane</location>
        <topology evidence="12">Single-pass type I membrane protein</topology>
    </subcellularLocation>
    <text evidence="4 5 7">Requires the partner CD8A for efficient cell surface expression (PubMed:3145196). The heterodimer CD8A/CD8B localizes to lipid rafts due to CD8B cytoplasmic tail palmitoylation.</text>
</comment>
<comment type="subcellular location">
    <molecule>Isoform 2</molecule>
    <subcellularLocation>
        <location evidence="12">Cell membrane</location>
        <topology evidence="12">Single-pass type I membrane protein</topology>
    </subcellularLocation>
</comment>
<comment type="subcellular location">
    <molecule>Isoform 3</molecule>
    <subcellularLocation>
        <location evidence="12">Secreted</location>
    </subcellularLocation>
</comment>
<comment type="subcellular location">
    <molecule>Isoform 4</molecule>
    <subcellularLocation>
        <location evidence="12">Cell membrane</location>
        <topology evidence="12">Single-pass type I membrane protein</topology>
    </subcellularLocation>
</comment>
<comment type="subcellular location">
    <molecule>Isoform 5</molecule>
    <subcellularLocation>
        <location evidence="12">Cell membrane</location>
        <topology evidence="12">Single-pass type I membrane protein</topology>
    </subcellularLocation>
</comment>
<comment type="subcellular location">
    <molecule>Isoform 6</molecule>
    <subcellularLocation>
        <location evidence="12">Secreted</location>
    </subcellularLocation>
</comment>
<comment type="subcellular location">
    <molecule>Isoform 7</molecule>
    <subcellularLocation>
        <location evidence="12">Secreted</location>
    </subcellularLocation>
</comment>
<comment type="subcellular location">
    <molecule>Isoform 8</molecule>
    <subcellularLocation>
        <location evidence="12">Secreted</location>
    </subcellularLocation>
</comment>
<comment type="alternative products">
    <event type="alternative splicing"/>
    <isoform>
        <id>P10966-1</id>
        <name>1</name>
        <name>M-1</name>
        <name>Mbeta1</name>
        <sequence type="displayed"/>
    </isoform>
    <isoform>
        <id>P10966-2</id>
        <name>2</name>
        <name>M-3</name>
        <name>Mbeta2</name>
        <sequence type="described" ref="VSP_002490"/>
    </isoform>
    <isoform>
        <id>P10966-3</id>
        <name>3</name>
        <name>S-1</name>
        <name>Sbeta3</name>
        <sequence type="described" ref="VSP_002492 VSP_002493"/>
    </isoform>
    <isoform>
        <id>P10966-4</id>
        <name>4</name>
        <name>M-2</name>
        <sequence type="described" ref="VSP_002491"/>
    </isoform>
    <isoform>
        <id>P10966-6</id>
        <name>5</name>
        <name>Mbeta3</name>
        <sequence type="described" ref="VSP_002493"/>
    </isoform>
    <isoform>
        <id>P10966-7</id>
        <name>6</name>
        <name>Sbeta1</name>
        <sequence type="described" ref="VSP_002492"/>
    </isoform>
    <isoform>
        <id>P10966-8</id>
        <name>7</name>
        <name>Sbeta4</name>
        <sequence type="described" ref="VSP_039654"/>
    </isoform>
    <isoform>
        <id>P10966-9</id>
        <name>8</name>
        <name>Sbeta5</name>
        <sequence type="described" ref="VSP_039655"/>
    </isoform>
</comment>
<comment type="tissue specificity">
    <text evidence="8">Isoform 1, isoform 3, isoform 5, isoform 6, isoform 7 and isoform 8 are expressed in both thymus and peripheral CD8+ T-cells. Expression of isoform 1 is higher in thymus CD8+ T-cells than in peripheral CD8+ T-cells. Expression of isoform 6 is higher in peripheral CD8+ T-cells than in thymus CD8+ T-cells.</text>
</comment>
<comment type="PTM">
    <text evidence="12">Phosphorylated as a consequence of T-cell activation.</text>
</comment>
<comment type="PTM">
    <text evidence="4">Palmitoylated at the cytoplasmic tail and thereby targets the heterodimer CD8A/CD8B to lipid rafts unlike CD8A homodimers.</text>
</comment>
<comment type="sequence caution" evidence="12">
    <conflict type="erroneous gene model prediction">
        <sequence resource="EMBL-CDS" id="AAD13877"/>
    </conflict>
</comment>
<comment type="online information" name="Wikipedia">
    <link uri="https://en.wikipedia.org/wiki/CD8"/>
    <text>CD8 entry</text>
</comment>